<accession>Q6YV23</accession>
<accession>Q6YV24</accession>
<accession>Q8S3R8</accession>
<evidence type="ECO:0000250" key="1">
    <source>
        <dbReference type="UniProtKB" id="P0A6F1"/>
    </source>
</evidence>
<evidence type="ECO:0000250" key="2">
    <source>
        <dbReference type="UniProtKB" id="Q9LVW7"/>
    </source>
</evidence>
<evidence type="ECO:0000255" key="3"/>
<evidence type="ECO:0000255" key="4">
    <source>
        <dbReference type="PROSITE-ProRule" id="PRU00605"/>
    </source>
</evidence>
<evidence type="ECO:0000256" key="5">
    <source>
        <dbReference type="SAM" id="MobiDB-lite"/>
    </source>
</evidence>
<evidence type="ECO:0000305" key="6"/>
<reference key="1">
    <citation type="journal article" date="2004" name="Mol. Cells">
        <title>Further evidence of microcolinearity between barley and rice genomes at two orthologous regions.</title>
        <authorList>
            <person name="Park Y.-J."/>
            <person name="Dixit A."/>
            <person name="Yoo J.-W."/>
            <person name="Bennetzen J."/>
        </authorList>
    </citation>
    <scope>NUCLEOTIDE SEQUENCE [GENOMIC DNA]</scope>
    <source>
        <strain>cv. Nipponbare</strain>
    </source>
</reference>
<reference key="2">
    <citation type="journal article" date="2005" name="Nature">
        <title>The map-based sequence of the rice genome.</title>
        <authorList>
            <consortium name="International rice genome sequencing project (IRGSP)"/>
        </authorList>
    </citation>
    <scope>NUCLEOTIDE SEQUENCE [LARGE SCALE GENOMIC DNA]</scope>
    <source>
        <strain>cv. Nipponbare</strain>
    </source>
</reference>
<reference key="3">
    <citation type="journal article" date="2008" name="Nucleic Acids Res.">
        <title>The rice annotation project database (RAP-DB): 2008 update.</title>
        <authorList>
            <consortium name="The rice annotation project (RAP)"/>
        </authorList>
    </citation>
    <scope>GENOME REANNOTATION</scope>
    <source>
        <strain>cv. Nipponbare</strain>
    </source>
</reference>
<reference key="4">
    <citation type="journal article" date="2013" name="Rice">
        <title>Improvement of the Oryza sativa Nipponbare reference genome using next generation sequence and optical map data.</title>
        <authorList>
            <person name="Kawahara Y."/>
            <person name="de la Bastide M."/>
            <person name="Hamilton J.P."/>
            <person name="Kanamori H."/>
            <person name="McCombie W.R."/>
            <person name="Ouyang S."/>
            <person name="Schwartz D.C."/>
            <person name="Tanaka T."/>
            <person name="Wu J."/>
            <person name="Zhou S."/>
            <person name="Childs K.L."/>
            <person name="Davidson R.M."/>
            <person name="Lin H."/>
            <person name="Quesada-Ocampo L."/>
            <person name="Vaillancourt B."/>
            <person name="Sakai H."/>
            <person name="Lee S.S."/>
            <person name="Kim J."/>
            <person name="Numa H."/>
            <person name="Itoh T."/>
            <person name="Buell C.R."/>
            <person name="Matsumoto T."/>
        </authorList>
    </citation>
    <scope>GENOME REANNOTATION</scope>
    <source>
        <strain>cv. Nipponbare</strain>
    </source>
</reference>
<reference key="5">
    <citation type="journal article" date="2003" name="Science">
        <title>Collection, mapping, and annotation of over 28,000 cDNA clones from japonica rice.</title>
        <authorList>
            <consortium name="The rice full-length cDNA consortium"/>
        </authorList>
    </citation>
    <scope>NUCLEOTIDE SEQUENCE [LARGE SCALE MRNA]</scope>
    <source>
        <strain>cv. Nipponbare</strain>
    </source>
</reference>
<gene>
    <name type="primary">CARA</name>
    <name type="ordered locus">Os02g0708100</name>
    <name type="ordered locus">LOC_Os02g47850</name>
    <name type="ORF">OSJNBb0060O16.25</name>
</gene>
<dbReference type="EC" id="6.3.5.5"/>
<dbReference type="EMBL" id="AF480496">
    <property type="protein sequence ID" value="AAL87160.1"/>
    <property type="status" value="ALT_SEQ"/>
    <property type="molecule type" value="Genomic_DNA"/>
</dbReference>
<dbReference type="EMBL" id="AP005844">
    <property type="protein sequence ID" value="BAD08105.1"/>
    <property type="status" value="ALT_SEQ"/>
    <property type="molecule type" value="Genomic_DNA"/>
</dbReference>
<dbReference type="EMBL" id="AP005844">
    <property type="protein sequence ID" value="BAD08106.1"/>
    <property type="status" value="ALT_SEQ"/>
    <property type="molecule type" value="Genomic_DNA"/>
</dbReference>
<dbReference type="EMBL" id="AP008208">
    <property type="protein sequence ID" value="BAF09794.1"/>
    <property type="status" value="ALT_SEQ"/>
    <property type="molecule type" value="Genomic_DNA"/>
</dbReference>
<dbReference type="EMBL" id="AP014958">
    <property type="status" value="NOT_ANNOTATED_CDS"/>
    <property type="molecule type" value="Genomic_DNA"/>
</dbReference>
<dbReference type="EMBL" id="AK102055">
    <property type="protein sequence ID" value="BAG95366.1"/>
    <property type="status" value="ALT_SEQ"/>
    <property type="molecule type" value="mRNA"/>
</dbReference>
<dbReference type="RefSeq" id="XP_015625687.1">
    <property type="nucleotide sequence ID" value="XM_015770201.1"/>
</dbReference>
<dbReference type="RefSeq" id="XP_015625689.1">
    <property type="nucleotide sequence ID" value="XM_015770203.1"/>
</dbReference>
<dbReference type="SMR" id="Q6YV23"/>
<dbReference type="FunCoup" id="Q6YV23">
    <property type="interactions" value="1085"/>
</dbReference>
<dbReference type="STRING" id="39947.Q6YV23"/>
<dbReference type="MEROPS" id="C26.A04"/>
<dbReference type="PaxDb" id="39947-Q6YV23"/>
<dbReference type="KEGG" id="dosa:Os02g0708100"/>
<dbReference type="eggNOG" id="KOG0370">
    <property type="taxonomic scope" value="Eukaryota"/>
</dbReference>
<dbReference type="HOGENOM" id="CLU_035901_2_1_1"/>
<dbReference type="InParanoid" id="Q6YV23"/>
<dbReference type="OrthoDB" id="434at2759"/>
<dbReference type="PlantReactome" id="R-OSA-1119263">
    <property type="pathway name" value="Arginine biosynthesis"/>
</dbReference>
<dbReference type="PlantReactome" id="R-OSA-1119495">
    <property type="pathway name" value="Citrulline biosynthesis"/>
</dbReference>
<dbReference type="PlantReactome" id="R-OSA-1119622">
    <property type="pathway name" value="Arginine biosynthesis II (acetyl cycle)"/>
</dbReference>
<dbReference type="UniPathway" id="UPA00068">
    <property type="reaction ID" value="UER00171"/>
</dbReference>
<dbReference type="UniPathway" id="UPA00070">
    <property type="reaction ID" value="UER00115"/>
</dbReference>
<dbReference type="Proteomes" id="UP000000763">
    <property type="component" value="Chromosome 2"/>
</dbReference>
<dbReference type="Proteomes" id="UP000059680">
    <property type="component" value="Chromosome 2"/>
</dbReference>
<dbReference type="GO" id="GO:0005951">
    <property type="term" value="C:carbamoyl-phosphate synthase complex"/>
    <property type="evidence" value="ECO:0000318"/>
    <property type="project" value="GO_Central"/>
</dbReference>
<dbReference type="GO" id="GO:0009507">
    <property type="term" value="C:chloroplast"/>
    <property type="evidence" value="ECO:0007669"/>
    <property type="project" value="UniProtKB-SubCell"/>
</dbReference>
<dbReference type="GO" id="GO:0005737">
    <property type="term" value="C:cytoplasm"/>
    <property type="evidence" value="ECO:0000318"/>
    <property type="project" value="GO_Central"/>
</dbReference>
<dbReference type="GO" id="GO:0005524">
    <property type="term" value="F:ATP binding"/>
    <property type="evidence" value="ECO:0007669"/>
    <property type="project" value="UniProtKB-KW"/>
</dbReference>
<dbReference type="GO" id="GO:0004088">
    <property type="term" value="F:carbamoyl-phosphate synthase (glutamine-hydrolyzing) activity"/>
    <property type="evidence" value="ECO:0007669"/>
    <property type="project" value="UniProtKB-EC"/>
</dbReference>
<dbReference type="GO" id="GO:0004359">
    <property type="term" value="F:glutaminase activity"/>
    <property type="evidence" value="ECO:0007669"/>
    <property type="project" value="RHEA"/>
</dbReference>
<dbReference type="GO" id="GO:0006207">
    <property type="term" value="P:'de novo' pyrimidine nucleobase biosynthetic process"/>
    <property type="evidence" value="ECO:0007669"/>
    <property type="project" value="InterPro"/>
</dbReference>
<dbReference type="GO" id="GO:0044205">
    <property type="term" value="P:'de novo' UMP biosynthetic process"/>
    <property type="evidence" value="ECO:0007669"/>
    <property type="project" value="UniProtKB-UniPathway"/>
</dbReference>
<dbReference type="GO" id="GO:0006541">
    <property type="term" value="P:glutamine metabolic process"/>
    <property type="evidence" value="ECO:0007669"/>
    <property type="project" value="InterPro"/>
</dbReference>
<dbReference type="GO" id="GO:0006526">
    <property type="term" value="P:L-arginine biosynthetic process"/>
    <property type="evidence" value="ECO:0000318"/>
    <property type="project" value="GO_Central"/>
</dbReference>
<dbReference type="CDD" id="cd01744">
    <property type="entry name" value="GATase1_CPSase"/>
    <property type="match status" value="1"/>
</dbReference>
<dbReference type="FunFam" id="3.50.30.20:FF:000001">
    <property type="entry name" value="Carbamoyl-phosphate synthase small chain"/>
    <property type="match status" value="1"/>
</dbReference>
<dbReference type="FunFam" id="3.40.50.880:FF:000034">
    <property type="entry name" value="carbamoyl-phosphate synthase small chain, chloroplastic"/>
    <property type="match status" value="1"/>
</dbReference>
<dbReference type="Gene3D" id="3.40.50.880">
    <property type="match status" value="1"/>
</dbReference>
<dbReference type="Gene3D" id="3.50.30.20">
    <property type="entry name" value="Carbamoyl-phosphate synthase small subunit, N-terminal domain"/>
    <property type="match status" value="1"/>
</dbReference>
<dbReference type="HAMAP" id="MF_01209">
    <property type="entry name" value="CPSase_S_chain"/>
    <property type="match status" value="1"/>
</dbReference>
<dbReference type="InterPro" id="IPR006274">
    <property type="entry name" value="CarbamoylP_synth_ssu"/>
</dbReference>
<dbReference type="InterPro" id="IPR002474">
    <property type="entry name" value="CarbamoylP_synth_ssu_N"/>
</dbReference>
<dbReference type="InterPro" id="IPR036480">
    <property type="entry name" value="CarbP_synth_ssu_N_sf"/>
</dbReference>
<dbReference type="InterPro" id="IPR029062">
    <property type="entry name" value="Class_I_gatase-like"/>
</dbReference>
<dbReference type="InterPro" id="IPR035686">
    <property type="entry name" value="CPSase_GATase1"/>
</dbReference>
<dbReference type="InterPro" id="IPR017926">
    <property type="entry name" value="GATASE"/>
</dbReference>
<dbReference type="NCBIfam" id="TIGR01368">
    <property type="entry name" value="CPSaseIIsmall"/>
    <property type="match status" value="1"/>
</dbReference>
<dbReference type="NCBIfam" id="NF009475">
    <property type="entry name" value="PRK12838.1"/>
    <property type="match status" value="1"/>
</dbReference>
<dbReference type="PANTHER" id="PTHR11405:SF4">
    <property type="entry name" value="CARBAMOYL-PHOSPHATE SYNTHASE ARGININE-SPECIFIC SMALL CHAIN"/>
    <property type="match status" value="1"/>
</dbReference>
<dbReference type="PANTHER" id="PTHR11405">
    <property type="entry name" value="CARBAMOYLTRANSFERASE FAMILY MEMBER"/>
    <property type="match status" value="1"/>
</dbReference>
<dbReference type="Pfam" id="PF00988">
    <property type="entry name" value="CPSase_sm_chain"/>
    <property type="match status" value="1"/>
</dbReference>
<dbReference type="Pfam" id="PF00117">
    <property type="entry name" value="GATase"/>
    <property type="match status" value="1"/>
</dbReference>
<dbReference type="PRINTS" id="PR00097">
    <property type="entry name" value="ANTSNTHASEII"/>
</dbReference>
<dbReference type="PRINTS" id="PR00099">
    <property type="entry name" value="CPSGATASE"/>
</dbReference>
<dbReference type="PRINTS" id="PR00096">
    <property type="entry name" value="GATASE"/>
</dbReference>
<dbReference type="SMART" id="SM01097">
    <property type="entry name" value="CPSase_sm_chain"/>
    <property type="match status" value="1"/>
</dbReference>
<dbReference type="SUPFAM" id="SSF52021">
    <property type="entry name" value="Carbamoyl phosphate synthetase, small subunit N-terminal domain"/>
    <property type="match status" value="1"/>
</dbReference>
<dbReference type="SUPFAM" id="SSF52317">
    <property type="entry name" value="Class I glutamine amidotransferase-like"/>
    <property type="match status" value="1"/>
</dbReference>
<dbReference type="PROSITE" id="PS51273">
    <property type="entry name" value="GATASE_TYPE_1"/>
    <property type="match status" value="1"/>
</dbReference>
<proteinExistence type="evidence at transcript level"/>
<feature type="transit peptide" description="Chloroplast" evidence="3">
    <location>
        <begin position="1"/>
        <end position="50"/>
    </location>
</feature>
<feature type="chain" id="PRO_0000423075" description="Carbamoyl phosphate synthase small chain, chloroplastic">
    <location>
        <begin position="51"/>
        <end position="446"/>
    </location>
</feature>
<feature type="domain" description="Glutamine amidotransferase type-1" evidence="4">
    <location>
        <begin position="261"/>
        <end position="446"/>
    </location>
</feature>
<feature type="region of interest" description="Disordered" evidence="5">
    <location>
        <begin position="1"/>
        <end position="44"/>
    </location>
</feature>
<feature type="compositionally biased region" description="Low complexity" evidence="5">
    <location>
        <begin position="1"/>
        <end position="32"/>
    </location>
</feature>
<feature type="active site" description="Nucleophile" evidence="4">
    <location>
        <position position="336"/>
    </location>
</feature>
<feature type="active site" evidence="4">
    <location>
        <position position="420"/>
    </location>
</feature>
<feature type="active site" evidence="4">
    <location>
        <position position="422"/>
    </location>
</feature>
<keyword id="KW-0028">Amino-acid biosynthesis</keyword>
<keyword id="KW-0055">Arginine biosynthesis</keyword>
<keyword id="KW-0067">ATP-binding</keyword>
<keyword id="KW-0150">Chloroplast</keyword>
<keyword id="KW-0315">Glutamine amidotransferase</keyword>
<keyword id="KW-0436">Ligase</keyword>
<keyword id="KW-0547">Nucleotide-binding</keyword>
<keyword id="KW-0934">Plastid</keyword>
<keyword id="KW-0665">Pyrimidine biosynthesis</keyword>
<keyword id="KW-1185">Reference proteome</keyword>
<keyword id="KW-0809">Transit peptide</keyword>
<sequence length="446" mass="48436">MAAPPATASAPSLRPSAASPRAAAARSVAVPSGPRTVGPRRDGGRFLGVRAAKAVSGVQSGTVVDDGVQRPWKLSDARLVLEDGSVWKAKSFGASGTQVGEVVFNTSLTGYQEILTDPSYAGQFVLMTNPHIGNTGVNPDDEESNRCFLAGLIIRNLSICTSNWRCTETLEEYLMKRNIMGIYDVDTRAITRRLREDGSLIGVLSTDQSRTDDELLEMAKNWKIVGVDLISGVTCDAPYEWSDKTDSEWEFKKGQSTESFHVVAYDFGIKHNILRRLTSYGCKITVVPANWPASEVLNLKPDGVFFSNGPGDPAAVPYAVKTVQEIIGKVPVFGICMGHQLIGQALGGKTFKMKFGHHGGNHPVCDLRSGRVDISAQNHNYAVDPESLPEGVKVTHINLNDNSCAGLQYPKMKLLSLQYHPESSPGPHDSDLAFGEFIEMMKNNRL</sequence>
<protein>
    <recommendedName>
        <fullName>Carbamoyl phosphate synthase small chain, chloroplastic</fullName>
        <ecNumber>6.3.5.5</ecNumber>
    </recommendedName>
    <alternativeName>
        <fullName>Carbamoyl phosphate synthetase glutamine chain</fullName>
    </alternativeName>
</protein>
<name>CARA_ORYSJ</name>
<comment type="function">
    <text evidence="2">Small subunit of the arginine-specific carbamoyl phosphate synthase (CPSase). CPSase catalyzes the formation of carbamoyl phosphate from the ammonia moiety of glutamine, carbonate, and phosphate donated by ATP, the first step of the arginine biosynthetic pathway. The small subunit (glutamine amidotransferase) binds and cleaves glutamine to supply the large subunit with the substrate ammonia.</text>
</comment>
<comment type="catalytic activity">
    <reaction evidence="2">
        <text>hydrogencarbonate + L-glutamine + 2 ATP + H2O = carbamoyl phosphate + L-glutamate + 2 ADP + phosphate + 2 H(+)</text>
        <dbReference type="Rhea" id="RHEA:18633"/>
        <dbReference type="ChEBI" id="CHEBI:15377"/>
        <dbReference type="ChEBI" id="CHEBI:15378"/>
        <dbReference type="ChEBI" id="CHEBI:17544"/>
        <dbReference type="ChEBI" id="CHEBI:29985"/>
        <dbReference type="ChEBI" id="CHEBI:30616"/>
        <dbReference type="ChEBI" id="CHEBI:43474"/>
        <dbReference type="ChEBI" id="CHEBI:58228"/>
        <dbReference type="ChEBI" id="CHEBI:58359"/>
        <dbReference type="ChEBI" id="CHEBI:456216"/>
        <dbReference type="EC" id="6.3.5.5"/>
    </reaction>
</comment>
<comment type="catalytic activity">
    <molecule>Carbamoyl phosphate synthase small chain, chloroplastic</molecule>
    <reaction evidence="1">
        <text>L-glutamine + H2O = L-glutamate + NH4(+)</text>
        <dbReference type="Rhea" id="RHEA:15889"/>
        <dbReference type="ChEBI" id="CHEBI:15377"/>
        <dbReference type="ChEBI" id="CHEBI:28938"/>
        <dbReference type="ChEBI" id="CHEBI:29985"/>
        <dbReference type="ChEBI" id="CHEBI:58359"/>
    </reaction>
</comment>
<comment type="pathway">
    <text>Amino-acid biosynthesis; L-arginine biosynthesis; carbamoyl phosphate from bicarbonate: step 1/1.</text>
</comment>
<comment type="pathway">
    <text>Pyrimidine metabolism; UMP biosynthesis via de novo pathway; (S)-dihydroorotate from bicarbonate: step 1/3.</text>
</comment>
<comment type="subunit">
    <text evidence="1">Heterodimer composed of 2 chains; the small (or glutamine) chain promotes the hydrolysis of glutamine to ammonia, which is used by the large (or ammonia) chain to synthesize carbamoyl phosphate.</text>
</comment>
<comment type="subcellular location">
    <subcellularLocation>
        <location evidence="6">Plastid</location>
        <location evidence="6">Chloroplast</location>
    </subcellularLocation>
</comment>
<comment type="similarity">
    <text evidence="6">Belongs to the CarA family.</text>
</comment>
<comment type="sequence caution" evidence="6">
    <conflict type="erroneous gene model prediction">
        <sequence resource="EMBL-CDS" id="AAL87160"/>
    </conflict>
</comment>
<comment type="sequence caution" evidence="6">
    <conflict type="erroneous gene model prediction">
        <sequence resource="EMBL-CDS" id="BAD08105"/>
    </conflict>
</comment>
<comment type="sequence caution" evidence="6">
    <conflict type="erroneous gene model prediction">
        <sequence resource="EMBL-CDS" id="BAD08106"/>
    </conflict>
</comment>
<comment type="sequence caution" evidence="6">
    <conflict type="erroneous gene model prediction">
        <sequence resource="EMBL-CDS" id="BAF09794"/>
    </conflict>
</comment>
<comment type="sequence caution" evidence="6">
    <conflict type="miscellaneous discrepancy">
        <sequence resource="EMBL-CDS" id="BAG95366"/>
    </conflict>
    <text>Intron retention.</text>
</comment>
<organism>
    <name type="scientific">Oryza sativa subsp. japonica</name>
    <name type="common">Rice</name>
    <dbReference type="NCBI Taxonomy" id="39947"/>
    <lineage>
        <taxon>Eukaryota</taxon>
        <taxon>Viridiplantae</taxon>
        <taxon>Streptophyta</taxon>
        <taxon>Embryophyta</taxon>
        <taxon>Tracheophyta</taxon>
        <taxon>Spermatophyta</taxon>
        <taxon>Magnoliopsida</taxon>
        <taxon>Liliopsida</taxon>
        <taxon>Poales</taxon>
        <taxon>Poaceae</taxon>
        <taxon>BOP clade</taxon>
        <taxon>Oryzoideae</taxon>
        <taxon>Oryzeae</taxon>
        <taxon>Oryzinae</taxon>
        <taxon>Oryza</taxon>
        <taxon>Oryza sativa</taxon>
    </lineage>
</organism>